<proteinExistence type="evidence at transcript level"/>
<reference key="1">
    <citation type="journal article" date="2000" name="DNA Res.">
        <title>Structural analysis of Arabidopsis thaliana chromosome 3. I. Sequence features of the regions of 4,504,864 bp covered by sixty P1 and TAC clones.</title>
        <authorList>
            <person name="Sato S."/>
            <person name="Nakamura Y."/>
            <person name="Kaneko T."/>
            <person name="Katoh T."/>
            <person name="Asamizu E."/>
            <person name="Tabata S."/>
        </authorList>
    </citation>
    <scope>NUCLEOTIDE SEQUENCE [LARGE SCALE GENOMIC DNA]</scope>
    <source>
        <strain>cv. Columbia</strain>
    </source>
</reference>
<reference key="2">
    <citation type="journal article" date="2017" name="Plant J.">
        <title>Araport11: a complete reannotation of the Arabidopsis thaliana reference genome.</title>
        <authorList>
            <person name="Cheng C.Y."/>
            <person name="Krishnakumar V."/>
            <person name="Chan A.P."/>
            <person name="Thibaud-Nissen F."/>
            <person name="Schobel S."/>
            <person name="Town C.D."/>
        </authorList>
    </citation>
    <scope>GENOME REANNOTATION</scope>
    <source>
        <strain>cv. Columbia</strain>
    </source>
</reference>
<reference key="3">
    <citation type="journal article" date="2003" name="Science">
        <title>Empirical analysis of transcriptional activity in the Arabidopsis genome.</title>
        <authorList>
            <person name="Yamada K."/>
            <person name="Lim J."/>
            <person name="Dale J.M."/>
            <person name="Chen H."/>
            <person name="Shinn P."/>
            <person name="Palm C.J."/>
            <person name="Southwick A.M."/>
            <person name="Wu H.C."/>
            <person name="Kim C.J."/>
            <person name="Nguyen M."/>
            <person name="Pham P.K."/>
            <person name="Cheuk R.F."/>
            <person name="Karlin-Newmann G."/>
            <person name="Liu S.X."/>
            <person name="Lam B."/>
            <person name="Sakano H."/>
            <person name="Wu T."/>
            <person name="Yu G."/>
            <person name="Miranda M."/>
            <person name="Quach H.L."/>
            <person name="Tripp M."/>
            <person name="Chang C.H."/>
            <person name="Lee J.M."/>
            <person name="Toriumi M.J."/>
            <person name="Chan M.M."/>
            <person name="Tang C.C."/>
            <person name="Onodera C.S."/>
            <person name="Deng J.M."/>
            <person name="Akiyama K."/>
            <person name="Ansari Y."/>
            <person name="Arakawa T."/>
            <person name="Banh J."/>
            <person name="Banno F."/>
            <person name="Bowser L."/>
            <person name="Brooks S.Y."/>
            <person name="Carninci P."/>
            <person name="Chao Q."/>
            <person name="Choy N."/>
            <person name="Enju A."/>
            <person name="Goldsmith A.D."/>
            <person name="Gurjal M."/>
            <person name="Hansen N.F."/>
            <person name="Hayashizaki Y."/>
            <person name="Johnson-Hopson C."/>
            <person name="Hsuan V.W."/>
            <person name="Iida K."/>
            <person name="Karnes M."/>
            <person name="Khan S."/>
            <person name="Koesema E."/>
            <person name="Ishida J."/>
            <person name="Jiang P.X."/>
            <person name="Jones T."/>
            <person name="Kawai J."/>
            <person name="Kamiya A."/>
            <person name="Meyers C."/>
            <person name="Nakajima M."/>
            <person name="Narusaka M."/>
            <person name="Seki M."/>
            <person name="Sakurai T."/>
            <person name="Satou M."/>
            <person name="Tamse R."/>
            <person name="Vaysberg M."/>
            <person name="Wallender E.K."/>
            <person name="Wong C."/>
            <person name="Yamamura Y."/>
            <person name="Yuan S."/>
            <person name="Shinozaki K."/>
            <person name="Davis R.W."/>
            <person name="Theologis A."/>
            <person name="Ecker J.R."/>
        </authorList>
    </citation>
    <scope>NUCLEOTIDE SEQUENCE [LARGE SCALE MRNA]</scope>
    <source>
        <strain>cv. Columbia</strain>
    </source>
</reference>
<reference key="4">
    <citation type="submission" date="2004-09" db="EMBL/GenBank/DDBJ databases">
        <title>Large-scale analysis of RIKEN Arabidopsis full-length (RAFL) cDNAs.</title>
        <authorList>
            <person name="Totoki Y."/>
            <person name="Seki M."/>
            <person name="Ishida J."/>
            <person name="Nakajima M."/>
            <person name="Enju A."/>
            <person name="Kamiya A."/>
            <person name="Narusaka M."/>
            <person name="Shin-i T."/>
            <person name="Nakagawa M."/>
            <person name="Sakamoto N."/>
            <person name="Oishi K."/>
            <person name="Kohara Y."/>
            <person name="Kobayashi M."/>
            <person name="Toyoda A."/>
            <person name="Sakaki Y."/>
            <person name="Sakurai T."/>
            <person name="Iida K."/>
            <person name="Akiyama K."/>
            <person name="Satou M."/>
            <person name="Toyoda T."/>
            <person name="Konagaya A."/>
            <person name="Carninci P."/>
            <person name="Kawai J."/>
            <person name="Hayashizaki Y."/>
            <person name="Shinozaki K."/>
        </authorList>
    </citation>
    <scope>NUCLEOTIDE SEQUENCE [LARGE SCALE MRNA]</scope>
    <source>
        <strain>cv. Columbia</strain>
    </source>
</reference>
<reference key="5">
    <citation type="journal article" date="2007" name="Plant Cell">
        <title>Proteome analysis of Arabidopsis leaf peroxisomes reveals novel targeting peptides, metabolic pathways, and defense mechanisms.</title>
        <authorList>
            <person name="Reumann S."/>
            <person name="Babujee L."/>
            <person name="Ma C."/>
            <person name="Wienkoop S."/>
            <person name="Siemsen T."/>
            <person name="Antonicelli G.E."/>
            <person name="Rasche N."/>
            <person name="Lueder F."/>
            <person name="Weckwerth W."/>
            <person name="Jahn O."/>
        </authorList>
    </citation>
    <scope>SUBCELLULAR LOCATION</scope>
</reference>
<comment type="function">
    <text evidence="1">Auxiliary enzyme of beta-oxidation. Participates in the degradation of unsaturated fatty enoyl-CoA esters having double bonds in both even- and odd-numbered positions in peroxisome. Catalyzes the NADP-dependent reduction of 2,4-dienoyl-CoA to yield trans-3-enoyl-CoA (By similarity).</text>
</comment>
<comment type="catalytic activity">
    <reaction evidence="5">
        <text>a (2E,4Z)-dienoyl-CoA + NADPH + H(+) = a 4,5-saturated-(3E)-enoyl-CoA + NADP(+)</text>
        <dbReference type="Rhea" id="RHEA:61892"/>
        <dbReference type="ChEBI" id="CHEBI:15378"/>
        <dbReference type="ChEBI" id="CHEBI:57783"/>
        <dbReference type="ChEBI" id="CHEBI:58349"/>
        <dbReference type="ChEBI" id="CHEBI:85099"/>
        <dbReference type="ChEBI" id="CHEBI:85493"/>
        <dbReference type="EC" id="1.3.1.124"/>
    </reaction>
</comment>
<comment type="catalytic activity">
    <reaction evidence="5">
        <text>a (2E,4E)-dienoyl-CoA + NADPH + H(+) = a 4,5-saturated-(3E)-enoyl-CoA + NADP(+)</text>
        <dbReference type="Rhea" id="RHEA:45912"/>
        <dbReference type="ChEBI" id="CHEBI:15378"/>
        <dbReference type="ChEBI" id="CHEBI:57783"/>
        <dbReference type="ChEBI" id="CHEBI:58349"/>
        <dbReference type="ChEBI" id="CHEBI:85101"/>
        <dbReference type="ChEBI" id="CHEBI:85493"/>
        <dbReference type="EC" id="1.3.1.124"/>
    </reaction>
</comment>
<comment type="subcellular location">
    <subcellularLocation>
        <location evidence="4">Peroxisome</location>
    </subcellularLocation>
</comment>
<comment type="similarity">
    <text evidence="5">Belongs to the short-chain dehydrogenases/reductases (SDR) family. 2,4-dienoyl-CoA reductase subfamily.</text>
</comment>
<comment type="caution">
    <text evidence="5">Was originally assigned as At3g12790.</text>
</comment>
<organism>
    <name type="scientific">Arabidopsis thaliana</name>
    <name type="common">Mouse-ear cress</name>
    <dbReference type="NCBI Taxonomy" id="3702"/>
    <lineage>
        <taxon>Eukaryota</taxon>
        <taxon>Viridiplantae</taxon>
        <taxon>Streptophyta</taxon>
        <taxon>Embryophyta</taxon>
        <taxon>Tracheophyta</taxon>
        <taxon>Spermatophyta</taxon>
        <taxon>Magnoliopsida</taxon>
        <taxon>eudicotyledons</taxon>
        <taxon>Gunneridae</taxon>
        <taxon>Pentapetalae</taxon>
        <taxon>rosids</taxon>
        <taxon>malvids</taxon>
        <taxon>Brassicales</taxon>
        <taxon>Brassicaceae</taxon>
        <taxon>Camelineae</taxon>
        <taxon>Arabidopsis</taxon>
    </lineage>
</organism>
<dbReference type="EC" id="1.3.1.124" evidence="5"/>
<dbReference type="EMBL" id="AB024033">
    <property type="protein sequence ID" value="BAB02424.1"/>
    <property type="molecule type" value="Genomic_DNA"/>
</dbReference>
<dbReference type="EMBL" id="CP002686">
    <property type="protein sequence ID" value="AEE75247.1"/>
    <property type="molecule type" value="Genomic_DNA"/>
</dbReference>
<dbReference type="EMBL" id="AY072396">
    <property type="protein sequence ID" value="AAL62388.1"/>
    <property type="molecule type" value="mRNA"/>
</dbReference>
<dbReference type="EMBL" id="AY114700">
    <property type="protein sequence ID" value="AAM48019.1"/>
    <property type="molecule type" value="mRNA"/>
</dbReference>
<dbReference type="EMBL" id="AK175259">
    <property type="protein sequence ID" value="BAD43022.1"/>
    <property type="molecule type" value="mRNA"/>
</dbReference>
<dbReference type="EMBL" id="AK175900">
    <property type="protein sequence ID" value="BAD43663.1"/>
    <property type="molecule type" value="mRNA"/>
</dbReference>
<dbReference type="EMBL" id="AK176181">
    <property type="protein sequence ID" value="BAD43944.1"/>
    <property type="molecule type" value="mRNA"/>
</dbReference>
<dbReference type="EMBL" id="AK176305">
    <property type="protein sequence ID" value="BAD44068.1"/>
    <property type="molecule type" value="mRNA"/>
</dbReference>
<dbReference type="EMBL" id="AK176508">
    <property type="protein sequence ID" value="BAD44271.1"/>
    <property type="molecule type" value="mRNA"/>
</dbReference>
<dbReference type="EMBL" id="AK176631">
    <property type="protein sequence ID" value="BAD44394.1"/>
    <property type="molecule type" value="mRNA"/>
</dbReference>
<dbReference type="EMBL" id="AK176892">
    <property type="protein sequence ID" value="BAD44655.1"/>
    <property type="molecule type" value="mRNA"/>
</dbReference>
<dbReference type="EMBL" id="AK176909">
    <property type="protein sequence ID" value="BAD44672.1"/>
    <property type="molecule type" value="mRNA"/>
</dbReference>
<dbReference type="EMBL" id="AK176776">
    <property type="protein sequence ID" value="BAD44539.1"/>
    <property type="molecule type" value="mRNA"/>
</dbReference>
<dbReference type="EMBL" id="AK221326">
    <property type="protein sequence ID" value="BAD94126.1"/>
    <property type="molecule type" value="mRNA"/>
</dbReference>
<dbReference type="SMR" id="Q9LTV6"/>
<dbReference type="FunCoup" id="Q9LTV6">
    <property type="interactions" value="2331"/>
</dbReference>
<dbReference type="IntAct" id="Q9LTV6">
    <property type="interactions" value="1"/>
</dbReference>
<dbReference type="STRING" id="3702.Q9LTV6"/>
<dbReference type="GlyGen" id="Q9LTV6">
    <property type="glycosylation" value="1 site"/>
</dbReference>
<dbReference type="PaxDb" id="3702-AT3G12800.1"/>
<dbReference type="ProteomicsDB" id="222198"/>
<dbReference type="EnsemblPlants" id="AT3G12800.1">
    <property type="protein sequence ID" value="AT3G12800.1"/>
    <property type="gene ID" value="AT3G12800"/>
</dbReference>
<dbReference type="Gramene" id="AT3G12800.1">
    <property type="protein sequence ID" value="AT3G12800.1"/>
    <property type="gene ID" value="AT3G12800"/>
</dbReference>
<dbReference type="KEGG" id="ath:AT3G12800"/>
<dbReference type="Araport" id="AT3G12800"/>
<dbReference type="TAIR" id="AT3G12800">
    <property type="gene designation" value="SDRB"/>
</dbReference>
<dbReference type="eggNOG" id="KOG0725">
    <property type="taxonomic scope" value="Eukaryota"/>
</dbReference>
<dbReference type="HOGENOM" id="CLU_010194_1_2_1"/>
<dbReference type="InParanoid" id="Q9LTV6"/>
<dbReference type="OMA" id="MQAHVCA"/>
<dbReference type="PhylomeDB" id="Q9LTV6"/>
<dbReference type="BioCyc" id="ARA:AT3G12800-MONOMER"/>
<dbReference type="CD-CODE" id="4299E36E">
    <property type="entry name" value="Nucleolus"/>
</dbReference>
<dbReference type="PRO" id="PR:Q9LTV6"/>
<dbReference type="Proteomes" id="UP000006548">
    <property type="component" value="Chromosome 3"/>
</dbReference>
<dbReference type="ExpressionAtlas" id="Q9LTV6">
    <property type="expression patterns" value="baseline and differential"/>
</dbReference>
<dbReference type="GO" id="GO:0005777">
    <property type="term" value="C:peroxisome"/>
    <property type="evidence" value="ECO:0007005"/>
    <property type="project" value="TAIR"/>
</dbReference>
<dbReference type="GO" id="GO:0000325">
    <property type="term" value="C:plant-type vacuole"/>
    <property type="evidence" value="ECO:0007005"/>
    <property type="project" value="TAIR"/>
</dbReference>
<dbReference type="GO" id="GO:0008670">
    <property type="term" value="F:2,4-dienoyl-CoA reductase (NADPH) activity"/>
    <property type="evidence" value="ECO:0007669"/>
    <property type="project" value="InterPro"/>
</dbReference>
<dbReference type="GO" id="GO:0009062">
    <property type="term" value="P:fatty acid catabolic process"/>
    <property type="evidence" value="ECO:0007669"/>
    <property type="project" value="InterPro"/>
</dbReference>
<dbReference type="CDD" id="cd05369">
    <property type="entry name" value="TER_DECR_SDR_a"/>
    <property type="match status" value="1"/>
</dbReference>
<dbReference type="FunFam" id="3.40.50.720:FF:000084">
    <property type="entry name" value="Short-chain dehydrogenase reductase"/>
    <property type="match status" value="1"/>
</dbReference>
<dbReference type="Gene3D" id="3.40.50.720">
    <property type="entry name" value="NAD(P)-binding Rossmann-like Domain"/>
    <property type="match status" value="1"/>
</dbReference>
<dbReference type="InterPro" id="IPR045017">
    <property type="entry name" value="DECR2-like"/>
</dbReference>
<dbReference type="InterPro" id="IPR036291">
    <property type="entry name" value="NAD(P)-bd_dom_sf"/>
</dbReference>
<dbReference type="InterPro" id="IPR002347">
    <property type="entry name" value="SDR_fam"/>
</dbReference>
<dbReference type="PANTHER" id="PTHR43296">
    <property type="entry name" value="PEROXISOMAL 2,4-DIENOYL-COA REDUCTASE"/>
    <property type="match status" value="1"/>
</dbReference>
<dbReference type="PANTHER" id="PTHR43296:SF2">
    <property type="entry name" value="PEROXISOMAL 2,4-DIENOYL-COA REDUCTASE [(3E)-ENOYL-COA-PRODUCING]"/>
    <property type="match status" value="1"/>
</dbReference>
<dbReference type="Pfam" id="PF13561">
    <property type="entry name" value="adh_short_C2"/>
    <property type="match status" value="1"/>
</dbReference>
<dbReference type="PRINTS" id="PR00081">
    <property type="entry name" value="GDHRDH"/>
</dbReference>
<dbReference type="PRINTS" id="PR00080">
    <property type="entry name" value="SDRFAMILY"/>
</dbReference>
<dbReference type="SUPFAM" id="SSF51735">
    <property type="entry name" value="NAD(P)-binding Rossmann-fold domains"/>
    <property type="match status" value="1"/>
</dbReference>
<evidence type="ECO:0000250" key="1"/>
<evidence type="ECO:0000255" key="2"/>
<evidence type="ECO:0000256" key="3">
    <source>
        <dbReference type="SAM" id="MobiDB-lite"/>
    </source>
</evidence>
<evidence type="ECO:0000269" key="4">
    <source>
    </source>
</evidence>
<evidence type="ECO:0000305" key="5"/>
<gene>
    <name type="ordered locus">At3g12800</name>
    <name type="ORF">MBK21.23</name>
</gene>
<accession>Q9LTV6</accession>
<accession>Q67Y37</accession>
<accession>Q680G7</accession>
<sequence length="298" mass="31796">MDSPFKPDVVRGQVALITGGGSGIGFEISSQFGKHGASIAIMGRRKQVLDDAVSALRSLGIQAIGLEGDVRKQEDARRVVEATFQHFGKLDILVNAAAGNFLAAAEDLSPNGFRTVLDIDAVGTFNMCHAALKYLKKGAPGRDSSSGGGSIINISATLHYTASWYQIHVSAAKAAVDATTRNLALEWGTDYDIRVNGIAPGPIGGTPGMSKLVPEEIENKTREYMPLYKVGEKWDIAMAALYLSCDSGKYVSGLTMVVDGGLWLSKPRHLPKEAVKQLSRAVEKRSRAKPVGLPTSKL</sequence>
<feature type="chain" id="PRO_0000054564" description="Peroxisomal 2,4-dienoyl-CoA reductase [(3E)-enoyl-CoA-producing]">
    <location>
        <begin position="1"/>
        <end position="298"/>
    </location>
</feature>
<feature type="region of interest" description="Disordered" evidence="3">
    <location>
        <begin position="279"/>
        <end position="298"/>
    </location>
</feature>
<feature type="short sequence motif" description="Microbody targeting signal" evidence="2">
    <location>
        <begin position="296"/>
        <end position="298"/>
    </location>
</feature>
<feature type="binding site" evidence="1">
    <location>
        <begin position="19"/>
        <end position="24"/>
    </location>
    <ligand>
        <name>NADP(+)</name>
        <dbReference type="ChEBI" id="CHEBI:58349"/>
    </ligand>
</feature>
<feature type="binding site" evidence="1">
    <location>
        <position position="44"/>
    </location>
    <ligand>
        <name>substrate</name>
    </ligand>
</feature>
<feature type="binding site" evidence="1">
    <location>
        <position position="69"/>
    </location>
    <ligand>
        <name>NADP(+)</name>
        <dbReference type="ChEBI" id="CHEBI:58349"/>
    </ligand>
</feature>
<feature type="binding site" evidence="1">
    <location>
        <position position="71"/>
    </location>
    <ligand>
        <name>substrate</name>
    </ligand>
</feature>
<feature type="binding site" evidence="1">
    <location>
        <position position="101"/>
    </location>
    <ligand>
        <name>substrate</name>
    </ligand>
</feature>
<feature type="binding site" evidence="1">
    <location>
        <begin position="109"/>
        <end position="111"/>
    </location>
    <ligand>
        <name>substrate</name>
    </ligand>
</feature>
<feature type="binding site" evidence="1">
    <location>
        <position position="173"/>
    </location>
    <ligand>
        <name>NADP(+)</name>
        <dbReference type="ChEBI" id="CHEBI:58349"/>
    </ligand>
</feature>
<feature type="binding site" evidence="1">
    <location>
        <begin position="200"/>
        <end position="206"/>
    </location>
    <ligand>
        <name>NADP(+)</name>
        <dbReference type="ChEBI" id="CHEBI:58349"/>
    </ligand>
</feature>
<feature type="sequence conflict" description="In Ref. 4; BAD44394." evidence="5" ref="4">
    <original>M</original>
    <variation>L</variation>
    <location>
        <position position="127"/>
    </location>
</feature>
<feature type="sequence conflict" description="In Ref. 4; BAD43663." evidence="5" ref="4">
    <original>MA</original>
    <variation>IT</variation>
    <location>
        <begin position="238"/>
        <end position="239"/>
    </location>
</feature>
<name>DECR2_ARATH</name>
<keyword id="KW-0276">Fatty acid metabolism</keyword>
<keyword id="KW-0443">Lipid metabolism</keyword>
<keyword id="KW-0521">NADP</keyword>
<keyword id="KW-0560">Oxidoreductase</keyword>
<keyword id="KW-0576">Peroxisome</keyword>
<keyword id="KW-1185">Reference proteome</keyword>
<protein>
    <recommendedName>
        <fullName evidence="5">Peroxisomal 2,4-dienoyl-CoA reductase [(3E)-enoyl-CoA-producing]</fullName>
        <ecNumber evidence="5">1.3.1.124</ecNumber>
    </recommendedName>
</protein>